<proteinExistence type="evidence at protein level"/>
<sequence>MAEGSRIPQARALLQQCLHARLQIRPADGDVAAQWVEVQRGLVIYVCFFKGADKELLPKMVNTLLNVKLSETENGKHVSILDLPGNILIIPQATLGGRLKGRNMQYHSNSGKEEGFELYSQFVTLCEKEVAANSKCAEARVVVEHGTYGNRQVLKLDTNGPFTHLIEF</sequence>
<name>DTD2_HUMAN</name>
<accession>Q96FN9</accession>
<accession>D3DS87</accession>
<dbReference type="EC" id="3.1.1.96" evidence="2"/>
<dbReference type="EMBL" id="AL139353">
    <property type="status" value="NOT_ANNOTATED_CDS"/>
    <property type="molecule type" value="Genomic_DNA"/>
</dbReference>
<dbReference type="EMBL" id="AL163973">
    <property type="status" value="NOT_ANNOTATED_CDS"/>
    <property type="molecule type" value="Genomic_DNA"/>
</dbReference>
<dbReference type="EMBL" id="CH471078">
    <property type="protein sequence ID" value="EAW65944.1"/>
    <property type="molecule type" value="Genomic_DNA"/>
</dbReference>
<dbReference type="EMBL" id="CH471078">
    <property type="protein sequence ID" value="EAW65945.1"/>
    <property type="molecule type" value="Genomic_DNA"/>
</dbReference>
<dbReference type="EMBL" id="BC010618">
    <property type="protein sequence ID" value="AAH10618.1"/>
    <property type="molecule type" value="mRNA"/>
</dbReference>
<dbReference type="CCDS" id="CCDS9643.1"/>
<dbReference type="RefSeq" id="NP_542395.1">
    <property type="nucleotide sequence ID" value="NM_080664.3"/>
</dbReference>
<dbReference type="SMR" id="Q96FN9"/>
<dbReference type="BioGRID" id="125191">
    <property type="interactions" value="8"/>
</dbReference>
<dbReference type="FunCoup" id="Q96FN9">
    <property type="interactions" value="896"/>
</dbReference>
<dbReference type="STRING" id="9606.ENSP00000312224"/>
<dbReference type="iPTMnet" id="Q96FN9"/>
<dbReference type="PhosphoSitePlus" id="Q96FN9"/>
<dbReference type="BioMuta" id="DTD2"/>
<dbReference type="DMDM" id="74731729"/>
<dbReference type="jPOST" id="Q96FN9"/>
<dbReference type="MassIVE" id="Q96FN9"/>
<dbReference type="PaxDb" id="9606-ENSP00000312224"/>
<dbReference type="PeptideAtlas" id="Q96FN9"/>
<dbReference type="ProteomicsDB" id="76548"/>
<dbReference type="Pumba" id="Q96FN9"/>
<dbReference type="Antibodypedia" id="47252">
    <property type="antibodies" value="99 antibodies from 18 providers"/>
</dbReference>
<dbReference type="DNASU" id="112487"/>
<dbReference type="Ensembl" id="ENST00000310850.9">
    <property type="protein sequence ID" value="ENSP00000312224.4"/>
    <property type="gene ID" value="ENSG00000129480.14"/>
</dbReference>
<dbReference type="GeneID" id="112487"/>
<dbReference type="KEGG" id="hsa:112487"/>
<dbReference type="MANE-Select" id="ENST00000310850.9">
    <property type="protein sequence ID" value="ENSP00000312224.4"/>
    <property type="RefSeq nucleotide sequence ID" value="NM_080664.3"/>
    <property type="RefSeq protein sequence ID" value="NP_542395.1"/>
</dbReference>
<dbReference type="UCSC" id="uc001wrj.5">
    <property type="organism name" value="human"/>
</dbReference>
<dbReference type="AGR" id="HGNC:20277"/>
<dbReference type="CTD" id="112487"/>
<dbReference type="DisGeNET" id="112487"/>
<dbReference type="GeneCards" id="DTD2"/>
<dbReference type="HGNC" id="HGNC:20277">
    <property type="gene designation" value="DTD2"/>
</dbReference>
<dbReference type="HPA" id="ENSG00000129480">
    <property type="expression patterns" value="Low tissue specificity"/>
</dbReference>
<dbReference type="neXtProt" id="NX_Q96FN9"/>
<dbReference type="OpenTargets" id="ENSG00000129480"/>
<dbReference type="PharmGKB" id="PA134963117"/>
<dbReference type="VEuPathDB" id="HostDB:ENSG00000129480"/>
<dbReference type="eggNOG" id="KOG3323">
    <property type="taxonomic scope" value="Eukaryota"/>
</dbReference>
<dbReference type="GeneTree" id="ENSGT00940000153431"/>
<dbReference type="HOGENOM" id="CLU_076118_1_0_1"/>
<dbReference type="InParanoid" id="Q96FN9"/>
<dbReference type="OMA" id="QQCLHAK"/>
<dbReference type="OrthoDB" id="275783at2759"/>
<dbReference type="PAN-GO" id="Q96FN9">
    <property type="GO annotations" value="3 GO annotations based on evolutionary models"/>
</dbReference>
<dbReference type="PhylomeDB" id="Q96FN9"/>
<dbReference type="TreeFam" id="TF329119"/>
<dbReference type="PathwayCommons" id="Q96FN9"/>
<dbReference type="SignaLink" id="Q96FN9"/>
<dbReference type="BioGRID-ORCS" id="112487">
    <property type="hits" value="31 hits in 1160 CRISPR screens"/>
</dbReference>
<dbReference type="ChiTaRS" id="DTD2">
    <property type="organism name" value="human"/>
</dbReference>
<dbReference type="GenomeRNAi" id="112487"/>
<dbReference type="Pharos" id="Q96FN9">
    <property type="development level" value="Tbio"/>
</dbReference>
<dbReference type="PRO" id="PR:Q96FN9"/>
<dbReference type="Proteomes" id="UP000005640">
    <property type="component" value="Chromosome 14"/>
</dbReference>
<dbReference type="RNAct" id="Q96FN9">
    <property type="molecule type" value="protein"/>
</dbReference>
<dbReference type="Bgee" id="ENSG00000129480">
    <property type="expression patterns" value="Expressed in oviduct epithelium and 179 other cell types or tissues"/>
</dbReference>
<dbReference type="ExpressionAtlas" id="Q96FN9">
    <property type="expression patterns" value="baseline and differential"/>
</dbReference>
<dbReference type="GO" id="GO:0005737">
    <property type="term" value="C:cytoplasm"/>
    <property type="evidence" value="ECO:0000318"/>
    <property type="project" value="GO_Central"/>
</dbReference>
<dbReference type="GO" id="GO:0106105">
    <property type="term" value="F:Ala-tRNA(Thr) deacylase activity"/>
    <property type="evidence" value="ECO:0000314"/>
    <property type="project" value="UniProtKB"/>
</dbReference>
<dbReference type="GO" id="GO:0051500">
    <property type="term" value="F:D-tyrosyl-tRNA(Tyr) deacylase activity"/>
    <property type="evidence" value="ECO:0000318"/>
    <property type="project" value="GO_Central"/>
</dbReference>
<dbReference type="GO" id="GO:0000049">
    <property type="term" value="F:tRNA binding"/>
    <property type="evidence" value="ECO:0007669"/>
    <property type="project" value="UniProtKB-KW"/>
</dbReference>
<dbReference type="GO" id="GO:0106074">
    <property type="term" value="P:aminoacyl-tRNA metabolism involved in translational fidelity"/>
    <property type="evidence" value="ECO:0000314"/>
    <property type="project" value="UniProtKB"/>
</dbReference>
<dbReference type="GO" id="GO:0006399">
    <property type="term" value="P:tRNA metabolic process"/>
    <property type="evidence" value="ECO:0000318"/>
    <property type="project" value="GO_Central"/>
</dbReference>
<dbReference type="FunFam" id="3.50.80.10:FF:000003">
    <property type="entry name" value="probable D-tyrosyl-tRNA(Tyr) deacylase 2"/>
    <property type="match status" value="1"/>
</dbReference>
<dbReference type="Gene3D" id="3.50.80.10">
    <property type="entry name" value="D-tyrosyl-tRNA(Tyr) deacylase"/>
    <property type="match status" value="1"/>
</dbReference>
<dbReference type="InterPro" id="IPR003732">
    <property type="entry name" value="Daa-tRNA_deacyls_DTD"/>
</dbReference>
<dbReference type="InterPro" id="IPR023509">
    <property type="entry name" value="DTD-like_sf"/>
</dbReference>
<dbReference type="PANTHER" id="PTHR10472:SF1">
    <property type="entry name" value="D-AMINOACYL-TRNA DEACYLASE 2"/>
    <property type="match status" value="1"/>
</dbReference>
<dbReference type="PANTHER" id="PTHR10472">
    <property type="entry name" value="D-TYROSYL-TRNA TYR DEACYLASE"/>
    <property type="match status" value="1"/>
</dbReference>
<dbReference type="Pfam" id="PF02580">
    <property type="entry name" value="Tyr_Deacylase"/>
    <property type="match status" value="1"/>
</dbReference>
<dbReference type="SUPFAM" id="SSF69500">
    <property type="entry name" value="DTD-like"/>
    <property type="match status" value="1"/>
</dbReference>
<feature type="chain" id="PRO_0000254049" description="D-aminoacyl-tRNA deacylase 2">
    <location>
        <begin position="1"/>
        <end position="168"/>
    </location>
</feature>
<feature type="short sequence motif" description="Gly-transPro motif, allows the protein to recognize chirality of D-amino acids" evidence="1">
    <location>
        <begin position="160"/>
        <end position="161"/>
    </location>
</feature>
<feature type="sequence variant" id="VAR_028802" description="In dbSNP:rs17097904.">
    <original>R</original>
    <variation>W</variation>
    <location>
        <position position="6"/>
    </location>
</feature>
<gene>
    <name type="primary">DTD2</name>
    <name type="synonym">C14orf126</name>
</gene>
<keyword id="KW-0963">Cytoplasm</keyword>
<keyword id="KW-0378">Hydrolase</keyword>
<keyword id="KW-1267">Proteomics identification</keyword>
<keyword id="KW-1185">Reference proteome</keyword>
<keyword id="KW-0694">RNA-binding</keyword>
<keyword id="KW-0820">tRNA-binding</keyword>
<protein>
    <recommendedName>
        <fullName evidence="4">D-aminoacyl-tRNA deacylase 2</fullName>
        <ecNumber evidence="2">3.1.1.96</ecNumber>
    </recommendedName>
    <alternativeName>
        <fullName evidence="3">Animalia-specific tRNA deacylase</fullName>
        <shortName evidence="3">ATD</shortName>
    </alternativeName>
    <alternativeName>
        <fullName evidence="4">D-tyrosyl-tRNA(Tyr) deacylase 2</fullName>
    </alternativeName>
    <alternativeName>
        <fullName evidence="5">L-alanyl-tRNA deacylase</fullName>
    </alternativeName>
</protein>
<reference key="1">
    <citation type="journal article" date="2003" name="Nature">
        <title>The DNA sequence and analysis of human chromosome 14.</title>
        <authorList>
            <person name="Heilig R."/>
            <person name="Eckenberg R."/>
            <person name="Petit J.-L."/>
            <person name="Fonknechten N."/>
            <person name="Da Silva C."/>
            <person name="Cattolico L."/>
            <person name="Levy M."/>
            <person name="Barbe V."/>
            <person name="De Berardinis V."/>
            <person name="Ureta-Vidal A."/>
            <person name="Pelletier E."/>
            <person name="Vico V."/>
            <person name="Anthouard V."/>
            <person name="Rowen L."/>
            <person name="Madan A."/>
            <person name="Qin S."/>
            <person name="Sun H."/>
            <person name="Du H."/>
            <person name="Pepin K."/>
            <person name="Artiguenave F."/>
            <person name="Robert C."/>
            <person name="Cruaud C."/>
            <person name="Bruels T."/>
            <person name="Jaillon O."/>
            <person name="Friedlander L."/>
            <person name="Samson G."/>
            <person name="Brottier P."/>
            <person name="Cure S."/>
            <person name="Segurens B."/>
            <person name="Aniere F."/>
            <person name="Samain S."/>
            <person name="Crespeau H."/>
            <person name="Abbasi N."/>
            <person name="Aiach N."/>
            <person name="Boscus D."/>
            <person name="Dickhoff R."/>
            <person name="Dors M."/>
            <person name="Dubois I."/>
            <person name="Friedman C."/>
            <person name="Gouyvenoux M."/>
            <person name="James R."/>
            <person name="Madan A."/>
            <person name="Mairey-Estrada B."/>
            <person name="Mangenot S."/>
            <person name="Martins N."/>
            <person name="Menard M."/>
            <person name="Oztas S."/>
            <person name="Ratcliffe A."/>
            <person name="Shaffer T."/>
            <person name="Trask B."/>
            <person name="Vacherie B."/>
            <person name="Bellemere C."/>
            <person name="Belser C."/>
            <person name="Besnard-Gonnet M."/>
            <person name="Bartol-Mavel D."/>
            <person name="Boutard M."/>
            <person name="Briez-Silla S."/>
            <person name="Combette S."/>
            <person name="Dufosse-Laurent V."/>
            <person name="Ferron C."/>
            <person name="Lechaplais C."/>
            <person name="Louesse C."/>
            <person name="Muselet D."/>
            <person name="Magdelenat G."/>
            <person name="Pateau E."/>
            <person name="Petit E."/>
            <person name="Sirvain-Trukniewicz P."/>
            <person name="Trybou A."/>
            <person name="Vega-Czarny N."/>
            <person name="Bataille E."/>
            <person name="Bluet E."/>
            <person name="Bordelais I."/>
            <person name="Dubois M."/>
            <person name="Dumont C."/>
            <person name="Guerin T."/>
            <person name="Haffray S."/>
            <person name="Hammadi R."/>
            <person name="Muanga J."/>
            <person name="Pellouin V."/>
            <person name="Robert D."/>
            <person name="Wunderle E."/>
            <person name="Gauguet G."/>
            <person name="Roy A."/>
            <person name="Sainte-Marthe L."/>
            <person name="Verdier J."/>
            <person name="Verdier-Discala C."/>
            <person name="Hillier L.W."/>
            <person name="Fulton L."/>
            <person name="McPherson J."/>
            <person name="Matsuda F."/>
            <person name="Wilson R."/>
            <person name="Scarpelli C."/>
            <person name="Gyapay G."/>
            <person name="Wincker P."/>
            <person name="Saurin W."/>
            <person name="Quetier F."/>
            <person name="Waterston R."/>
            <person name="Hood L."/>
            <person name="Weissenbach J."/>
        </authorList>
    </citation>
    <scope>NUCLEOTIDE SEQUENCE [LARGE SCALE GENOMIC DNA]</scope>
</reference>
<reference key="2">
    <citation type="submission" date="2005-09" db="EMBL/GenBank/DDBJ databases">
        <authorList>
            <person name="Mural R.J."/>
            <person name="Istrail S."/>
            <person name="Sutton G.G."/>
            <person name="Florea L."/>
            <person name="Halpern A.L."/>
            <person name="Mobarry C.M."/>
            <person name="Lippert R."/>
            <person name="Walenz B."/>
            <person name="Shatkay H."/>
            <person name="Dew I."/>
            <person name="Miller J.R."/>
            <person name="Flanigan M.J."/>
            <person name="Edwards N.J."/>
            <person name="Bolanos R."/>
            <person name="Fasulo D."/>
            <person name="Halldorsson B.V."/>
            <person name="Hannenhalli S."/>
            <person name="Turner R."/>
            <person name="Yooseph S."/>
            <person name="Lu F."/>
            <person name="Nusskern D.R."/>
            <person name="Shue B.C."/>
            <person name="Zheng X.H."/>
            <person name="Zhong F."/>
            <person name="Delcher A.L."/>
            <person name="Huson D.H."/>
            <person name="Kravitz S.A."/>
            <person name="Mouchard L."/>
            <person name="Reinert K."/>
            <person name="Remington K.A."/>
            <person name="Clark A.G."/>
            <person name="Waterman M.S."/>
            <person name="Eichler E.E."/>
            <person name="Adams M.D."/>
            <person name="Hunkapiller M.W."/>
            <person name="Myers E.W."/>
            <person name="Venter J.C."/>
        </authorList>
    </citation>
    <scope>NUCLEOTIDE SEQUENCE [LARGE SCALE GENOMIC DNA]</scope>
</reference>
<reference key="3">
    <citation type="journal article" date="2004" name="Genome Res.">
        <title>The status, quality, and expansion of the NIH full-length cDNA project: the Mammalian Gene Collection (MGC).</title>
        <authorList>
            <consortium name="The MGC Project Team"/>
        </authorList>
    </citation>
    <scope>NUCLEOTIDE SEQUENCE [LARGE SCALE MRNA]</scope>
    <source>
        <tissue>Eye</tissue>
    </source>
</reference>
<reference key="4">
    <citation type="journal article" date="2018" name="Nat. Commun.">
        <title>A chiral selectivity relaxed paralog of DTD for proofreading tRNA mischarging in Animalia.</title>
        <authorList>
            <person name="Kuncha S.K."/>
            <person name="Mazeed M."/>
            <person name="Singh R."/>
            <person name="Kattula B."/>
            <person name="Routh S.B."/>
            <person name="Sankaranarayanan R."/>
        </authorList>
    </citation>
    <scope>FUNCTION</scope>
    <scope>CATALYTIC ACTIVITY</scope>
</reference>
<evidence type="ECO:0000250" key="1">
    <source>
        <dbReference type="UniProtKB" id="Q8BHA3"/>
    </source>
</evidence>
<evidence type="ECO:0000269" key="2">
    <source>
    </source>
</evidence>
<evidence type="ECO:0000303" key="3">
    <source>
    </source>
</evidence>
<evidence type="ECO:0000305" key="4"/>
<evidence type="ECO:0000305" key="5">
    <source>
    </source>
</evidence>
<organism>
    <name type="scientific">Homo sapiens</name>
    <name type="common">Human</name>
    <dbReference type="NCBI Taxonomy" id="9606"/>
    <lineage>
        <taxon>Eukaryota</taxon>
        <taxon>Metazoa</taxon>
        <taxon>Chordata</taxon>
        <taxon>Craniata</taxon>
        <taxon>Vertebrata</taxon>
        <taxon>Euteleostomi</taxon>
        <taxon>Mammalia</taxon>
        <taxon>Eutheria</taxon>
        <taxon>Euarchontoglires</taxon>
        <taxon>Primates</taxon>
        <taxon>Haplorrhini</taxon>
        <taxon>Catarrhini</taxon>
        <taxon>Hominidae</taxon>
        <taxon>Homo</taxon>
    </lineage>
</organism>
<comment type="function">
    <text evidence="1 2">Deacylates mischarged D-aminoacyl-tRNAs (By similarity). Also deacylates mischarged glycyl-tRNA(Ala), protecting cells against glycine mischarging by AlaRS (By similarity). Probably acts by rejecting L-amino acids from its binding site rather than specific recognition of D-amino acids (By similarity). Catalyzes the hydrolysis of D-tyrosyl-tRNA(Tyr), has no activity on correctly charged L-tyrosyl-tRNA(Tyr) (By similarity). By recycling D-aminoacyl-tRNA to D-amino acids and free tRNA molecules, this enzyme counteracts the toxicity associated with the formation of D-aminoacyl-tRNA entities in vivo and helps enforce protein L-homochirality. In contrast to DTD1, deacylates L-Ala mischarged on tRNA(Thr)(G4.U69) by alanine-tRNA ligase AARS (PubMed:29410408). Can deacylate L-Ala due to a relaxed specificity for substrate chirality caused by the trans conformation of the Gly-Pro motif in the active site (PubMed:29410408). Also hydrolyzes correctly charged, achiral, glycyl-tRNA(Gly) in vitro, although in vivo EEF1A1/EF-Tu may protect cognate achiral glycyl-tRNA(Gly) from DTD2-mediated deacetylation (By similarity).</text>
</comment>
<comment type="catalytic activity">
    <reaction evidence="2">
        <text>a D-aminoacyl-tRNA + H2O = a tRNA + a D-alpha-amino acid + H(+)</text>
        <dbReference type="Rhea" id="RHEA:13953"/>
        <dbReference type="Rhea" id="RHEA-COMP:10123"/>
        <dbReference type="Rhea" id="RHEA-COMP:10124"/>
        <dbReference type="ChEBI" id="CHEBI:15377"/>
        <dbReference type="ChEBI" id="CHEBI:15378"/>
        <dbReference type="ChEBI" id="CHEBI:59871"/>
        <dbReference type="ChEBI" id="CHEBI:78442"/>
        <dbReference type="ChEBI" id="CHEBI:79333"/>
        <dbReference type="EC" id="3.1.1.96"/>
    </reaction>
</comment>
<comment type="catalytic activity">
    <reaction evidence="2">
        <text>glycyl-tRNA(Ala) + H2O = tRNA(Ala) + glycine + H(+)</text>
        <dbReference type="Rhea" id="RHEA:53744"/>
        <dbReference type="Rhea" id="RHEA-COMP:9657"/>
        <dbReference type="Rhea" id="RHEA-COMP:13640"/>
        <dbReference type="ChEBI" id="CHEBI:15377"/>
        <dbReference type="ChEBI" id="CHEBI:15378"/>
        <dbReference type="ChEBI" id="CHEBI:57305"/>
        <dbReference type="ChEBI" id="CHEBI:78442"/>
        <dbReference type="ChEBI" id="CHEBI:78522"/>
        <dbReference type="EC" id="3.1.1.96"/>
    </reaction>
</comment>
<comment type="catalytic activity">
    <reaction evidence="1">
        <text>D-tyrosyl-tRNA(Tyr) + H2O = D-tyrosine + tRNA(Tyr)</text>
        <dbReference type="Rhea" id="RHEA:25347"/>
        <dbReference type="Rhea" id="RHEA-COMP:9707"/>
        <dbReference type="Rhea" id="RHEA-COMP:9872"/>
        <dbReference type="ChEBI" id="CHEBI:15377"/>
        <dbReference type="ChEBI" id="CHEBI:58570"/>
        <dbReference type="ChEBI" id="CHEBI:78442"/>
        <dbReference type="ChEBI" id="CHEBI:78723"/>
    </reaction>
</comment>
<comment type="catalytic activity">
    <reaction evidence="2">
        <text>L-alanyl-tRNA(Thr) + H2O = tRNA(Thr) + L-alanine + H(+)</text>
        <dbReference type="Rhea" id="RHEA:17793"/>
        <dbReference type="Rhea" id="RHEA-COMP:9670"/>
        <dbReference type="Rhea" id="RHEA-COMP:14576"/>
        <dbReference type="ChEBI" id="CHEBI:15377"/>
        <dbReference type="ChEBI" id="CHEBI:15378"/>
        <dbReference type="ChEBI" id="CHEBI:57972"/>
        <dbReference type="ChEBI" id="CHEBI:78442"/>
        <dbReference type="ChEBI" id="CHEBI:78497"/>
    </reaction>
</comment>
<comment type="subunit">
    <text evidence="1">Homodimer.</text>
</comment>
<comment type="subcellular location">
    <subcellularLocation>
        <location evidence="4">Cytoplasm</location>
    </subcellularLocation>
</comment>
<comment type="domain">
    <text evidence="1">A Gly-transPro motif from one monomer fits into the active site of the other monomer to allow specific chiral rejection of most L-amino acids except L-Ala. The trans conformation of the motif is maintained by Arg-151.</text>
</comment>
<comment type="similarity">
    <text evidence="4">Belongs to the DTD family.</text>
</comment>